<accession>Q3Z2M2</accession>
<feature type="chain" id="PRO_0000257131" description="Probable transcriptional regulatory protein YebC">
    <location>
        <begin position="1"/>
        <end position="246"/>
    </location>
</feature>
<feature type="region of interest" description="Disordered" evidence="2">
    <location>
        <begin position="1"/>
        <end position="20"/>
    </location>
</feature>
<proteinExistence type="inferred from homology"/>
<name>YEBC_SHISS</name>
<protein>
    <recommendedName>
        <fullName evidence="1">Probable transcriptional regulatory protein YebC</fullName>
    </recommendedName>
</protein>
<sequence length="246" mass="26423">MAGHSKWANTRHRKAAQDAKRGKIFTKIIRELVTAAKLGGGDPDANPRLRAAVDKALSNNMTRDTLNRAIARGVGGDDDANMETIIYEGYGPGGTAIMIECLSDNRNRTVAEVRHAFSKCGGNLGTDGSVAYLFSKKGVISFEKGDEDTIMEAALEAGAEDVVTYDDGAIDVYTAWEEMGKVRDALEAAGLKADSAEVSMIPSTKADMDAETAPKLMRLIDMLEDCDDVQEVYHNGEISDEVAATL</sequence>
<evidence type="ECO:0000255" key="1">
    <source>
        <dbReference type="HAMAP-Rule" id="MF_00693"/>
    </source>
</evidence>
<evidence type="ECO:0000256" key="2">
    <source>
        <dbReference type="SAM" id="MobiDB-lite"/>
    </source>
</evidence>
<organism>
    <name type="scientific">Shigella sonnei (strain Ss046)</name>
    <dbReference type="NCBI Taxonomy" id="300269"/>
    <lineage>
        <taxon>Bacteria</taxon>
        <taxon>Pseudomonadati</taxon>
        <taxon>Pseudomonadota</taxon>
        <taxon>Gammaproteobacteria</taxon>
        <taxon>Enterobacterales</taxon>
        <taxon>Enterobacteriaceae</taxon>
        <taxon>Shigella</taxon>
    </lineage>
</organism>
<dbReference type="EMBL" id="CP000038">
    <property type="protein sequence ID" value="AAZ87990.1"/>
    <property type="molecule type" value="Genomic_DNA"/>
</dbReference>
<dbReference type="RefSeq" id="WP_000907248.1">
    <property type="nucleotide sequence ID" value="NC_007384.1"/>
</dbReference>
<dbReference type="SMR" id="Q3Z2M2"/>
<dbReference type="KEGG" id="ssn:SSON_1277"/>
<dbReference type="HOGENOM" id="CLU_062974_2_2_6"/>
<dbReference type="Proteomes" id="UP000002529">
    <property type="component" value="Chromosome"/>
</dbReference>
<dbReference type="GO" id="GO:0005829">
    <property type="term" value="C:cytosol"/>
    <property type="evidence" value="ECO:0007669"/>
    <property type="project" value="TreeGrafter"/>
</dbReference>
<dbReference type="GO" id="GO:0003677">
    <property type="term" value="F:DNA binding"/>
    <property type="evidence" value="ECO:0007669"/>
    <property type="project" value="UniProtKB-UniRule"/>
</dbReference>
<dbReference type="GO" id="GO:0006355">
    <property type="term" value="P:regulation of DNA-templated transcription"/>
    <property type="evidence" value="ECO:0007669"/>
    <property type="project" value="UniProtKB-UniRule"/>
</dbReference>
<dbReference type="FunFam" id="1.10.10.200:FF:000001">
    <property type="entry name" value="Probable transcriptional regulatory protein YebC"/>
    <property type="match status" value="1"/>
</dbReference>
<dbReference type="FunFam" id="3.30.70.980:FF:000002">
    <property type="entry name" value="Probable transcriptional regulatory protein YebC"/>
    <property type="match status" value="1"/>
</dbReference>
<dbReference type="Gene3D" id="1.10.10.200">
    <property type="match status" value="1"/>
</dbReference>
<dbReference type="Gene3D" id="3.30.70.980">
    <property type="match status" value="2"/>
</dbReference>
<dbReference type="HAMAP" id="MF_00693">
    <property type="entry name" value="Transcrip_reg_TACO1"/>
    <property type="match status" value="1"/>
</dbReference>
<dbReference type="InterPro" id="IPR017856">
    <property type="entry name" value="Integrase-like_N"/>
</dbReference>
<dbReference type="InterPro" id="IPR048300">
    <property type="entry name" value="TACO1_YebC-like_2nd/3rd_dom"/>
</dbReference>
<dbReference type="InterPro" id="IPR049083">
    <property type="entry name" value="TACO1_YebC_N"/>
</dbReference>
<dbReference type="InterPro" id="IPR002876">
    <property type="entry name" value="Transcrip_reg_TACO1-like"/>
</dbReference>
<dbReference type="InterPro" id="IPR026564">
    <property type="entry name" value="Transcrip_reg_TACO1-like_dom3"/>
</dbReference>
<dbReference type="InterPro" id="IPR029072">
    <property type="entry name" value="YebC-like"/>
</dbReference>
<dbReference type="NCBIfam" id="NF001030">
    <property type="entry name" value="PRK00110.1"/>
    <property type="match status" value="1"/>
</dbReference>
<dbReference type="NCBIfam" id="NF009044">
    <property type="entry name" value="PRK12378.1"/>
    <property type="match status" value="1"/>
</dbReference>
<dbReference type="NCBIfam" id="TIGR01033">
    <property type="entry name" value="YebC/PmpR family DNA-binding transcriptional regulator"/>
    <property type="match status" value="1"/>
</dbReference>
<dbReference type="PANTHER" id="PTHR12532:SF6">
    <property type="entry name" value="TRANSCRIPTIONAL REGULATORY PROTEIN YEBC-RELATED"/>
    <property type="match status" value="1"/>
</dbReference>
<dbReference type="PANTHER" id="PTHR12532">
    <property type="entry name" value="TRANSLATIONAL ACTIVATOR OF CYTOCHROME C OXIDASE 1"/>
    <property type="match status" value="1"/>
</dbReference>
<dbReference type="Pfam" id="PF20772">
    <property type="entry name" value="TACO1_YebC_N"/>
    <property type="match status" value="1"/>
</dbReference>
<dbReference type="Pfam" id="PF01709">
    <property type="entry name" value="Transcrip_reg"/>
    <property type="match status" value="1"/>
</dbReference>
<dbReference type="SUPFAM" id="SSF75625">
    <property type="entry name" value="YebC-like"/>
    <property type="match status" value="1"/>
</dbReference>
<keyword id="KW-0963">Cytoplasm</keyword>
<keyword id="KW-0238">DNA-binding</keyword>
<keyword id="KW-1185">Reference proteome</keyword>
<keyword id="KW-0804">Transcription</keyword>
<keyword id="KW-0805">Transcription regulation</keyword>
<gene>
    <name evidence="1" type="primary">yebC</name>
    <name type="ordered locus">SSON_1277</name>
</gene>
<reference key="1">
    <citation type="journal article" date="2005" name="Nucleic Acids Res.">
        <title>Genome dynamics and diversity of Shigella species, the etiologic agents of bacillary dysentery.</title>
        <authorList>
            <person name="Yang F."/>
            <person name="Yang J."/>
            <person name="Zhang X."/>
            <person name="Chen L."/>
            <person name="Jiang Y."/>
            <person name="Yan Y."/>
            <person name="Tang X."/>
            <person name="Wang J."/>
            <person name="Xiong Z."/>
            <person name="Dong J."/>
            <person name="Xue Y."/>
            <person name="Zhu Y."/>
            <person name="Xu X."/>
            <person name="Sun L."/>
            <person name="Chen S."/>
            <person name="Nie H."/>
            <person name="Peng J."/>
            <person name="Xu J."/>
            <person name="Wang Y."/>
            <person name="Yuan Z."/>
            <person name="Wen Y."/>
            <person name="Yao Z."/>
            <person name="Shen Y."/>
            <person name="Qiang B."/>
            <person name="Hou Y."/>
            <person name="Yu J."/>
            <person name="Jin Q."/>
        </authorList>
    </citation>
    <scope>NUCLEOTIDE SEQUENCE [LARGE SCALE GENOMIC DNA]</scope>
    <source>
        <strain>Ss046</strain>
    </source>
</reference>
<comment type="subcellular location">
    <subcellularLocation>
        <location evidence="1">Cytoplasm</location>
    </subcellularLocation>
</comment>
<comment type="similarity">
    <text evidence="1">Belongs to the TACO1 family.</text>
</comment>